<proteinExistence type="evidence at protein level"/>
<reference key="1">
    <citation type="journal article" date="1991" name="Mol. Cell. Biol.">
        <title>The yeast homolog to mouse Tcp-1 affects microtubule-mediated processes.</title>
        <authorList>
            <person name="Ursic D."/>
            <person name="Culbertson M.R."/>
        </authorList>
    </citation>
    <scope>NUCLEOTIDE SEQUENCE [GENOMIC DNA]</scope>
    <source>
        <strain>ATCC 204508 / S288c</strain>
    </source>
</reference>
<reference key="2">
    <citation type="journal article" date="1997" name="Nature">
        <title>The nucleotide sequence of Saccharomyces cerevisiae chromosome IV.</title>
        <authorList>
            <person name="Jacq C."/>
            <person name="Alt-Moerbe J."/>
            <person name="Andre B."/>
            <person name="Arnold W."/>
            <person name="Bahr A."/>
            <person name="Ballesta J.P.G."/>
            <person name="Bargues M."/>
            <person name="Baron L."/>
            <person name="Becker A."/>
            <person name="Biteau N."/>
            <person name="Bloecker H."/>
            <person name="Blugeon C."/>
            <person name="Boskovic J."/>
            <person name="Brandt P."/>
            <person name="Brueckner M."/>
            <person name="Buitrago M.J."/>
            <person name="Coster F."/>
            <person name="Delaveau T."/>
            <person name="del Rey F."/>
            <person name="Dujon B."/>
            <person name="Eide L.G."/>
            <person name="Garcia-Cantalejo J.M."/>
            <person name="Goffeau A."/>
            <person name="Gomez-Peris A."/>
            <person name="Granotier C."/>
            <person name="Hanemann V."/>
            <person name="Hankeln T."/>
            <person name="Hoheisel J.D."/>
            <person name="Jaeger W."/>
            <person name="Jimenez A."/>
            <person name="Jonniaux J.-L."/>
            <person name="Kraemer C."/>
            <person name="Kuester H."/>
            <person name="Laamanen P."/>
            <person name="Legros Y."/>
            <person name="Louis E.J."/>
            <person name="Moeller-Rieker S."/>
            <person name="Monnet A."/>
            <person name="Moro M."/>
            <person name="Mueller-Auer S."/>
            <person name="Nussbaumer B."/>
            <person name="Paricio N."/>
            <person name="Paulin L."/>
            <person name="Perea J."/>
            <person name="Perez-Alonso M."/>
            <person name="Perez-Ortin J.E."/>
            <person name="Pohl T.M."/>
            <person name="Prydz H."/>
            <person name="Purnelle B."/>
            <person name="Rasmussen S.W."/>
            <person name="Remacha M.A."/>
            <person name="Revuelta J.L."/>
            <person name="Rieger M."/>
            <person name="Salom D."/>
            <person name="Saluz H.P."/>
            <person name="Saiz J.E."/>
            <person name="Saren A.-M."/>
            <person name="Schaefer M."/>
            <person name="Scharfe M."/>
            <person name="Schmidt E.R."/>
            <person name="Schneider C."/>
            <person name="Scholler P."/>
            <person name="Schwarz S."/>
            <person name="Soler-Mira A."/>
            <person name="Urrestarazu L.A."/>
            <person name="Verhasselt P."/>
            <person name="Vissers S."/>
            <person name="Voet M."/>
            <person name="Volckaert G."/>
            <person name="Wagner G."/>
            <person name="Wambutt R."/>
            <person name="Wedler E."/>
            <person name="Wedler H."/>
            <person name="Woelfl S."/>
            <person name="Harris D.E."/>
            <person name="Bowman S."/>
            <person name="Brown D."/>
            <person name="Churcher C.M."/>
            <person name="Connor R."/>
            <person name="Dedman K."/>
            <person name="Gentles S."/>
            <person name="Hamlin N."/>
            <person name="Hunt S."/>
            <person name="Jones L."/>
            <person name="McDonald S."/>
            <person name="Murphy L.D."/>
            <person name="Niblett D."/>
            <person name="Odell C."/>
            <person name="Oliver K."/>
            <person name="Rajandream M.A."/>
            <person name="Richards C."/>
            <person name="Shore L."/>
            <person name="Walsh S.V."/>
            <person name="Barrell B.G."/>
            <person name="Dietrich F.S."/>
            <person name="Mulligan J.T."/>
            <person name="Allen E."/>
            <person name="Araujo R."/>
            <person name="Aviles E."/>
            <person name="Berno A."/>
            <person name="Carpenter J."/>
            <person name="Chen E."/>
            <person name="Cherry J.M."/>
            <person name="Chung E."/>
            <person name="Duncan M."/>
            <person name="Hunicke-Smith S."/>
            <person name="Hyman R.W."/>
            <person name="Komp C."/>
            <person name="Lashkari D."/>
            <person name="Lew H."/>
            <person name="Lin D."/>
            <person name="Mosedale D."/>
            <person name="Nakahara K."/>
            <person name="Namath A."/>
            <person name="Oefner P."/>
            <person name="Oh C."/>
            <person name="Petel F.X."/>
            <person name="Roberts D."/>
            <person name="Schramm S."/>
            <person name="Schroeder M."/>
            <person name="Shogren T."/>
            <person name="Shroff N."/>
            <person name="Winant A."/>
            <person name="Yelton M.A."/>
            <person name="Botstein D."/>
            <person name="Davis R.W."/>
            <person name="Johnston M."/>
            <person name="Andrews S."/>
            <person name="Brinkman R."/>
            <person name="Cooper J."/>
            <person name="Ding H."/>
            <person name="Du Z."/>
            <person name="Favello A."/>
            <person name="Fulton L."/>
            <person name="Gattung S."/>
            <person name="Greco T."/>
            <person name="Hallsworth K."/>
            <person name="Hawkins J."/>
            <person name="Hillier L.W."/>
            <person name="Jier M."/>
            <person name="Johnson D."/>
            <person name="Johnston L."/>
            <person name="Kirsten J."/>
            <person name="Kucaba T."/>
            <person name="Langston Y."/>
            <person name="Latreille P."/>
            <person name="Le T."/>
            <person name="Mardis E."/>
            <person name="Menezes S."/>
            <person name="Miller N."/>
            <person name="Nhan M."/>
            <person name="Pauley A."/>
            <person name="Peluso D."/>
            <person name="Rifkin L."/>
            <person name="Riles L."/>
            <person name="Taich A."/>
            <person name="Trevaskis E."/>
            <person name="Vignati D."/>
            <person name="Wilcox L."/>
            <person name="Wohldman P."/>
            <person name="Vaudin M."/>
            <person name="Wilson R."/>
            <person name="Waterston R."/>
            <person name="Albermann K."/>
            <person name="Hani J."/>
            <person name="Heumann K."/>
            <person name="Kleine K."/>
            <person name="Mewes H.-W."/>
            <person name="Zollner A."/>
            <person name="Zaccaria P."/>
        </authorList>
    </citation>
    <scope>NUCLEOTIDE SEQUENCE [LARGE SCALE GENOMIC DNA]</scope>
    <source>
        <strain>ATCC 204508 / S288c</strain>
    </source>
</reference>
<reference key="3">
    <citation type="journal article" date="2014" name="G3 (Bethesda)">
        <title>The reference genome sequence of Saccharomyces cerevisiae: Then and now.</title>
        <authorList>
            <person name="Engel S.R."/>
            <person name="Dietrich F.S."/>
            <person name="Fisk D.G."/>
            <person name="Binkley G."/>
            <person name="Balakrishnan R."/>
            <person name="Costanzo M.C."/>
            <person name="Dwight S.S."/>
            <person name="Hitz B.C."/>
            <person name="Karra K."/>
            <person name="Nash R.S."/>
            <person name="Weng S."/>
            <person name="Wong E.D."/>
            <person name="Lloyd P."/>
            <person name="Skrzypek M.S."/>
            <person name="Miyasato S.R."/>
            <person name="Simison M."/>
            <person name="Cherry J.M."/>
        </authorList>
    </citation>
    <scope>GENOME REANNOTATION</scope>
    <source>
        <strain>ATCC 204508 / S288c</strain>
    </source>
</reference>
<reference key="4">
    <citation type="journal article" date="1994" name="Proc. Natl. Acad. Sci. U.S.A.">
        <title>Primary structure and function of a second essential member of the heterooligomeric TCP1 chaperonin complex of yeast, TCP1 beta.</title>
        <authorList>
            <person name="Miklos D."/>
            <person name="Caplan S."/>
            <person name="Mertens D."/>
            <person name="Hynes G."/>
            <person name="Pitluk Z."/>
            <person name="Kashi Y."/>
            <person name="Harrison-Lavoie K."/>
            <person name="Stevenson S."/>
            <person name="Brown C."/>
            <person name="Barrell B.G."/>
            <person name="Horwich A.L."/>
            <person name="Willison K."/>
        </authorList>
    </citation>
    <scope>MUTAGENESIS</scope>
</reference>
<reference key="5">
    <citation type="journal article" date="2008" name="Mol. Cell. Proteomics">
        <title>A multidimensional chromatography technology for in-depth phosphoproteome analysis.</title>
        <authorList>
            <person name="Albuquerque C.P."/>
            <person name="Smolka M.B."/>
            <person name="Payne S.H."/>
            <person name="Bafna V."/>
            <person name="Eng J."/>
            <person name="Zhou H."/>
        </authorList>
    </citation>
    <scope>IDENTIFICATION BY MASS SPECTROMETRY [LARGE SCALE ANALYSIS]</scope>
</reference>
<reference key="6">
    <citation type="journal article" date="2012" name="Proc. Natl. Acad. Sci. U.S.A.">
        <title>N-terminal acetylome analyses and functional insights of the N-terminal acetyltransferase NatB.</title>
        <authorList>
            <person name="Van Damme P."/>
            <person name="Lasa M."/>
            <person name="Polevoda B."/>
            <person name="Gazquez C."/>
            <person name="Elosegui-Artola A."/>
            <person name="Kim D.S."/>
            <person name="De Juan-Pardo E."/>
            <person name="Demeyer K."/>
            <person name="Hole K."/>
            <person name="Larrea E."/>
            <person name="Timmerman E."/>
            <person name="Prieto J."/>
            <person name="Arnesen T."/>
            <person name="Sherman F."/>
            <person name="Gevaert K."/>
            <person name="Aldabe R."/>
        </authorList>
    </citation>
    <scope>ACETYLATION [LARGE SCALE ANALYSIS] AT SER-2</scope>
    <scope>CLEAVAGE OF INITIATOR METHIONINE [LARGE SCALE ANALYSIS]</scope>
    <scope>IDENTIFICATION BY MASS SPECTROMETRY [LARGE SCALE ANALYSIS]</scope>
</reference>
<organism>
    <name type="scientific">Saccharomyces cerevisiae (strain ATCC 204508 / S288c)</name>
    <name type="common">Baker's yeast</name>
    <dbReference type="NCBI Taxonomy" id="559292"/>
    <lineage>
        <taxon>Eukaryota</taxon>
        <taxon>Fungi</taxon>
        <taxon>Dikarya</taxon>
        <taxon>Ascomycota</taxon>
        <taxon>Saccharomycotina</taxon>
        <taxon>Saccharomycetes</taxon>
        <taxon>Saccharomycetales</taxon>
        <taxon>Saccharomycetaceae</taxon>
        <taxon>Saccharomyces</taxon>
    </lineage>
</organism>
<gene>
    <name type="primary">TCP1</name>
    <name type="synonym">CCT1</name>
    <name type="ordered locus">YDR212W</name>
    <name type="ORF">YD8142.13</name>
    <name type="ORF">YD8142B.04</name>
</gene>
<evidence type="ECO:0000269" key="1">
    <source>
    </source>
</evidence>
<evidence type="ECO:0000305" key="2"/>
<evidence type="ECO:0007744" key="3">
    <source>
    </source>
</evidence>
<evidence type="ECO:0007829" key="4">
    <source>
        <dbReference type="PDB" id="6KS6"/>
    </source>
</evidence>
<evidence type="ECO:0007829" key="5">
    <source>
        <dbReference type="PDB" id="7YLY"/>
    </source>
</evidence>
<dbReference type="EMBL" id="M21160">
    <property type="protein sequence ID" value="AAA35139.1"/>
    <property type="molecule type" value="Genomic_DNA"/>
</dbReference>
<dbReference type="EMBL" id="Z68194">
    <property type="protein sequence ID" value="CAA92355.1"/>
    <property type="molecule type" value="Genomic_DNA"/>
</dbReference>
<dbReference type="EMBL" id="Z68195">
    <property type="protein sequence ID" value="CAA92363.1"/>
    <property type="molecule type" value="Genomic_DNA"/>
</dbReference>
<dbReference type="EMBL" id="BK006938">
    <property type="protein sequence ID" value="DAA12056.1"/>
    <property type="molecule type" value="Genomic_DNA"/>
</dbReference>
<dbReference type="PIR" id="A39793">
    <property type="entry name" value="A39793"/>
</dbReference>
<dbReference type="RefSeq" id="NP_010498.1">
    <property type="nucleotide sequence ID" value="NM_001180520.1"/>
</dbReference>
<dbReference type="PDB" id="4V81">
    <property type="method" value="X-ray"/>
    <property type="resolution" value="3.80 A"/>
    <property type="chains" value="A/I/a/i=1-559"/>
</dbReference>
<dbReference type="PDB" id="4V8R">
    <property type="method" value="X-ray"/>
    <property type="resolution" value="3.80 A"/>
    <property type="chains" value="AA/Aa/BA/Ba=1-559"/>
</dbReference>
<dbReference type="PDB" id="4V94">
    <property type="method" value="X-ray"/>
    <property type="resolution" value="3.80 A"/>
    <property type="chains" value="A/I/a/i=1-559"/>
</dbReference>
<dbReference type="PDB" id="5GW4">
    <property type="method" value="EM"/>
    <property type="resolution" value="4.70 A"/>
    <property type="chains" value="A/a=1-559"/>
</dbReference>
<dbReference type="PDB" id="5GW5">
    <property type="method" value="EM"/>
    <property type="resolution" value="4.60 A"/>
    <property type="chains" value="A/a=1-559"/>
</dbReference>
<dbReference type="PDB" id="6KRD">
    <property type="method" value="EM"/>
    <property type="resolution" value="4.38 A"/>
    <property type="chains" value="A/a=1-559"/>
</dbReference>
<dbReference type="PDB" id="6KRE">
    <property type="method" value="EM"/>
    <property type="resolution" value="4.45 A"/>
    <property type="chains" value="A/a=1-559"/>
</dbReference>
<dbReference type="PDB" id="6KS6">
    <property type="method" value="EM"/>
    <property type="resolution" value="2.99 A"/>
    <property type="chains" value="A/a=1-559"/>
</dbReference>
<dbReference type="PDB" id="6KS7">
    <property type="method" value="EM"/>
    <property type="resolution" value="4.62 A"/>
    <property type="chains" value="A/a=1-559"/>
</dbReference>
<dbReference type="PDB" id="6KS8">
    <property type="method" value="EM"/>
    <property type="resolution" value="4.69 A"/>
    <property type="chains" value="A/a=1-559"/>
</dbReference>
<dbReference type="PDB" id="7YLU">
    <property type="method" value="EM"/>
    <property type="resolution" value="4.55 A"/>
    <property type="chains" value="A/a=1-559"/>
</dbReference>
<dbReference type="PDB" id="7YLV">
    <property type="method" value="EM"/>
    <property type="resolution" value="3.91 A"/>
    <property type="chains" value="A/a=1-559"/>
</dbReference>
<dbReference type="PDB" id="7YLW">
    <property type="method" value="EM"/>
    <property type="resolution" value="3.39 A"/>
    <property type="chains" value="A/a=1-559"/>
</dbReference>
<dbReference type="PDB" id="7YLX">
    <property type="method" value="EM"/>
    <property type="resolution" value="3.20 A"/>
    <property type="chains" value="A/a=1-559"/>
</dbReference>
<dbReference type="PDB" id="7YLY">
    <property type="method" value="EM"/>
    <property type="resolution" value="3.05 A"/>
    <property type="chains" value="A/a=1-559"/>
</dbReference>
<dbReference type="PDB" id="9CR2">
    <property type="method" value="EM"/>
    <property type="resolution" value="4.80 A"/>
    <property type="chains" value="A/a=1-559"/>
</dbReference>
<dbReference type="PDB" id="9CS3">
    <property type="method" value="EM"/>
    <property type="resolution" value="5.60 A"/>
    <property type="chains" value="A/a=1-559"/>
</dbReference>
<dbReference type="PDB" id="9CS4">
    <property type="method" value="EM"/>
    <property type="resolution" value="6.80 A"/>
    <property type="chains" value="A/a=1-559"/>
</dbReference>
<dbReference type="PDB" id="9CS6">
    <property type="method" value="EM"/>
    <property type="resolution" value="4.10 A"/>
    <property type="chains" value="A/a=1-559"/>
</dbReference>
<dbReference type="PDB" id="9CSA">
    <property type="method" value="EM"/>
    <property type="resolution" value="3.60 A"/>
    <property type="chains" value="A/a=1-559"/>
</dbReference>
<dbReference type="PDBsum" id="4V81"/>
<dbReference type="PDBsum" id="4V8R"/>
<dbReference type="PDBsum" id="4V94"/>
<dbReference type="PDBsum" id="5GW4"/>
<dbReference type="PDBsum" id="5GW5"/>
<dbReference type="PDBsum" id="6KRD"/>
<dbReference type="PDBsum" id="6KRE"/>
<dbReference type="PDBsum" id="6KS6"/>
<dbReference type="PDBsum" id="6KS7"/>
<dbReference type="PDBsum" id="6KS8"/>
<dbReference type="PDBsum" id="7YLU"/>
<dbReference type="PDBsum" id="7YLV"/>
<dbReference type="PDBsum" id="7YLW"/>
<dbReference type="PDBsum" id="7YLX"/>
<dbReference type="PDBsum" id="7YLY"/>
<dbReference type="PDBsum" id="9CR2"/>
<dbReference type="PDBsum" id="9CS3"/>
<dbReference type="PDBsum" id="9CS4"/>
<dbReference type="PDBsum" id="9CS6"/>
<dbReference type="PDBsum" id="9CSA"/>
<dbReference type="EMDB" id="EMD-0756"/>
<dbReference type="EMDB" id="EMD-0757"/>
<dbReference type="EMDB" id="EMD-0758"/>
<dbReference type="EMDB" id="EMD-0759"/>
<dbReference type="EMDB" id="EMD-0760"/>
<dbReference type="EMDB" id="EMD-33917"/>
<dbReference type="EMDB" id="EMD-33918"/>
<dbReference type="EMDB" id="EMD-33919"/>
<dbReference type="EMDB" id="EMD-33920"/>
<dbReference type="EMDB" id="EMD-33921"/>
<dbReference type="EMDB" id="EMD-45830"/>
<dbReference type="EMDB" id="EMD-45886"/>
<dbReference type="EMDB" id="EMD-45887"/>
<dbReference type="EMDB" id="EMD-45888"/>
<dbReference type="EMDB" id="EMD-45889"/>
<dbReference type="EMDB" id="EMD-6902"/>
<dbReference type="EMDB" id="EMD-9540"/>
<dbReference type="EMDB" id="EMD-9541"/>
<dbReference type="SMR" id="P12612"/>
<dbReference type="BioGRID" id="32266">
    <property type="interactions" value="546"/>
</dbReference>
<dbReference type="ComplexPortal" id="CPX-2156">
    <property type="entry name" value="Chaperonin-containing T-complex"/>
</dbReference>
<dbReference type="DIP" id="DIP-2965N"/>
<dbReference type="FunCoup" id="P12612">
    <property type="interactions" value="1661"/>
</dbReference>
<dbReference type="IntAct" id="P12612">
    <property type="interactions" value="66"/>
</dbReference>
<dbReference type="MINT" id="P12612"/>
<dbReference type="STRING" id="4932.YDR212W"/>
<dbReference type="iPTMnet" id="P12612"/>
<dbReference type="PaxDb" id="4932-YDR212W"/>
<dbReference type="PeptideAtlas" id="P12612"/>
<dbReference type="DNASU" id="851798"/>
<dbReference type="EnsemblFungi" id="YDR212W_mRNA">
    <property type="protein sequence ID" value="YDR212W"/>
    <property type="gene ID" value="YDR212W"/>
</dbReference>
<dbReference type="GeneID" id="851798"/>
<dbReference type="KEGG" id="sce:YDR212W"/>
<dbReference type="AGR" id="SGD:S000002620"/>
<dbReference type="SGD" id="S000002620">
    <property type="gene designation" value="TCP1"/>
</dbReference>
<dbReference type="VEuPathDB" id="FungiDB:YDR212W"/>
<dbReference type="eggNOG" id="KOG0360">
    <property type="taxonomic scope" value="Eukaryota"/>
</dbReference>
<dbReference type="GeneTree" id="ENSGT00550000074878"/>
<dbReference type="HOGENOM" id="CLU_008891_5_1_1"/>
<dbReference type="InParanoid" id="P12612"/>
<dbReference type="OMA" id="RGPNDYQ"/>
<dbReference type="OrthoDB" id="10248520at2759"/>
<dbReference type="BioCyc" id="YEAST:G3O-29794-MONOMER"/>
<dbReference type="BRENDA" id="3.6.4.B10">
    <property type="organism ID" value="984"/>
</dbReference>
<dbReference type="Reactome" id="R-SCE-390471">
    <property type="pathway name" value="Association of TriC/CCT with target proteins during biosynthesis"/>
</dbReference>
<dbReference type="Reactome" id="R-SCE-6814122">
    <property type="pathway name" value="Cooperation of PDCL (PhLP1) and TRiC/CCT in G-protein beta folding"/>
</dbReference>
<dbReference type="BioGRID-ORCS" id="851798">
    <property type="hits" value="9 hits in 10 CRISPR screens"/>
</dbReference>
<dbReference type="CD-CODE" id="E03F929F">
    <property type="entry name" value="Stress granule"/>
</dbReference>
<dbReference type="PRO" id="PR:P12612"/>
<dbReference type="Proteomes" id="UP000002311">
    <property type="component" value="Chromosome IV"/>
</dbReference>
<dbReference type="RNAct" id="P12612">
    <property type="molecule type" value="protein"/>
</dbReference>
<dbReference type="GO" id="GO:0005832">
    <property type="term" value="C:chaperonin-containing T-complex"/>
    <property type="evidence" value="ECO:0000314"/>
    <property type="project" value="SGD"/>
</dbReference>
<dbReference type="GO" id="GO:0005886">
    <property type="term" value="C:plasma membrane"/>
    <property type="evidence" value="ECO:0007005"/>
    <property type="project" value="SGD"/>
</dbReference>
<dbReference type="GO" id="GO:0005524">
    <property type="term" value="F:ATP binding"/>
    <property type="evidence" value="ECO:0007669"/>
    <property type="project" value="UniProtKB-KW"/>
</dbReference>
<dbReference type="GO" id="GO:0016887">
    <property type="term" value="F:ATP hydrolysis activity"/>
    <property type="evidence" value="ECO:0007669"/>
    <property type="project" value="InterPro"/>
</dbReference>
<dbReference type="GO" id="GO:0140662">
    <property type="term" value="F:ATP-dependent protein folding chaperone"/>
    <property type="evidence" value="ECO:0007669"/>
    <property type="project" value="InterPro"/>
</dbReference>
<dbReference type="GO" id="GO:0051082">
    <property type="term" value="F:unfolded protein binding"/>
    <property type="evidence" value="ECO:0000314"/>
    <property type="project" value="SGD"/>
</dbReference>
<dbReference type="GO" id="GO:0051086">
    <property type="term" value="P:chaperone mediated protein folding independent of cofactor"/>
    <property type="evidence" value="ECO:0000314"/>
    <property type="project" value="ComplexPortal"/>
</dbReference>
<dbReference type="GO" id="GO:0006457">
    <property type="term" value="P:protein folding"/>
    <property type="evidence" value="ECO:0000314"/>
    <property type="project" value="SGD"/>
</dbReference>
<dbReference type="CDD" id="cd03335">
    <property type="entry name" value="TCP1_alpha"/>
    <property type="match status" value="1"/>
</dbReference>
<dbReference type="FunFam" id="3.50.7.10:FF:000009">
    <property type="entry name" value="T-complex protein 1 subunit alpha"/>
    <property type="match status" value="1"/>
</dbReference>
<dbReference type="FunFam" id="1.10.560.10:FF:000070">
    <property type="entry name" value="Uncharacterized protein"/>
    <property type="match status" value="1"/>
</dbReference>
<dbReference type="Gene3D" id="3.50.7.10">
    <property type="entry name" value="GroEL"/>
    <property type="match status" value="1"/>
</dbReference>
<dbReference type="Gene3D" id="1.10.560.10">
    <property type="entry name" value="GroEL-like equatorial domain"/>
    <property type="match status" value="1"/>
</dbReference>
<dbReference type="Gene3D" id="3.30.260.10">
    <property type="entry name" value="TCP-1-like chaperonin intermediate domain"/>
    <property type="match status" value="1"/>
</dbReference>
<dbReference type="InterPro" id="IPR012715">
    <property type="entry name" value="Chap_CCT_alpha"/>
</dbReference>
<dbReference type="InterPro" id="IPR017998">
    <property type="entry name" value="Chaperone_TCP-1"/>
</dbReference>
<dbReference type="InterPro" id="IPR002194">
    <property type="entry name" value="Chaperonin_TCP-1_CS"/>
</dbReference>
<dbReference type="InterPro" id="IPR002423">
    <property type="entry name" value="Cpn60/GroEL/TCP-1"/>
</dbReference>
<dbReference type="InterPro" id="IPR027409">
    <property type="entry name" value="GroEL-like_apical_dom_sf"/>
</dbReference>
<dbReference type="InterPro" id="IPR027413">
    <property type="entry name" value="GROEL-like_equatorial_sf"/>
</dbReference>
<dbReference type="InterPro" id="IPR027410">
    <property type="entry name" value="TCP-1-like_intermed_sf"/>
</dbReference>
<dbReference type="InterPro" id="IPR053374">
    <property type="entry name" value="TCP-1_chaperonin"/>
</dbReference>
<dbReference type="InterPro" id="IPR054827">
    <property type="entry name" value="thermosome_alpha"/>
</dbReference>
<dbReference type="NCBIfam" id="TIGR02340">
    <property type="entry name" value="chap_CCT_alpha"/>
    <property type="match status" value="1"/>
</dbReference>
<dbReference type="NCBIfam" id="NF041082">
    <property type="entry name" value="thermosome_alpha"/>
    <property type="match status" value="1"/>
</dbReference>
<dbReference type="NCBIfam" id="NF041083">
    <property type="entry name" value="thermosome_beta"/>
    <property type="match status" value="1"/>
</dbReference>
<dbReference type="PANTHER" id="PTHR11353">
    <property type="entry name" value="CHAPERONIN"/>
    <property type="match status" value="1"/>
</dbReference>
<dbReference type="Pfam" id="PF00118">
    <property type="entry name" value="Cpn60_TCP1"/>
    <property type="match status" value="1"/>
</dbReference>
<dbReference type="PRINTS" id="PR00304">
    <property type="entry name" value="TCOMPLEXTCP1"/>
</dbReference>
<dbReference type="SUPFAM" id="SSF52029">
    <property type="entry name" value="GroEL apical domain-like"/>
    <property type="match status" value="1"/>
</dbReference>
<dbReference type="SUPFAM" id="SSF48592">
    <property type="entry name" value="GroEL equatorial domain-like"/>
    <property type="match status" value="1"/>
</dbReference>
<dbReference type="SUPFAM" id="SSF54849">
    <property type="entry name" value="GroEL-intermediate domain like"/>
    <property type="match status" value="1"/>
</dbReference>
<dbReference type="PROSITE" id="PS00750">
    <property type="entry name" value="TCP1_1"/>
    <property type="match status" value="1"/>
</dbReference>
<dbReference type="PROSITE" id="PS00751">
    <property type="entry name" value="TCP1_2"/>
    <property type="match status" value="1"/>
</dbReference>
<dbReference type="PROSITE" id="PS00995">
    <property type="entry name" value="TCP1_3"/>
    <property type="match status" value="1"/>
</dbReference>
<sequence>MSQLFNNSRSDTLFLGGEKISGDDIRNQNVLATMAVANVVKSSLGPVGLDKMLVDDIGDFTVTNDGATILSLLDVQHPAGKILVELAQQQDREIGDGTTSVVIIASELLKRANELVKNKIHPTTIITGFRVALREAIRFINEVLSTSVDTLGKETLINIAKTSMSSKIIGADSDFFSNMVVDALLAVKTQNSKGEIKYPVKAVNVLKAHGKSATESLLVPGYALNCTVASQAMPKRIAGGNVKIACLDLNLQKARMAMGVQINIDDPEQLEQIRKREAGIVLERVKKIIDAGAQVVLTTKGIDDLCLKEFVEAKIMGVRRCKKEDLRRIARATGATLVSSMSNLEGEETFESSYLGLCDEVVQAKFSDDECILIKGTSKHSSSSIILRGANDYSLDEMERSLHDSLSVVKRTLESGNVVPGGGCVEAALNIYLDNFATTVGSREQLAIAEFAAALLIIPKTLAVNAAKDSSELVAKLRSYHAASQMAKPEDVKRRSYRNYGLDLIRGKIVDEIHAGVLEPTISKVKSLKSALEACVAILRIDTMITVDPEPPKEDPHDH</sequence>
<comment type="function">
    <text>Molecular chaperone; assists the folding of proteins upon ATP hydrolysis. Known to play a role, in vitro, in the folding of actin and tubulin. In yeast may play a role in mitotic spindle formation.</text>
</comment>
<comment type="subunit">
    <text>Heterooligomeric complex of about 850 to 900 kDa that forms two stacked rings, 12 to 16 nm in diameter.</text>
</comment>
<comment type="interaction">
    <interactant intactId="EBI-19045">
        <id>P12612</id>
    </interactant>
    <interactant intactId="EBI-2169">
        <id>P60010</id>
        <label>ACT1</label>
    </interactant>
    <organismsDiffer>false</organismsDiffer>
    <experiments>3</experiments>
</comment>
<comment type="subcellular location">
    <subcellularLocation>
        <location>Cytoplasm</location>
    </subcellularLocation>
</comment>
<comment type="similarity">
    <text evidence="2">Belongs to the TCP-1 chaperonin family.</text>
</comment>
<protein>
    <recommendedName>
        <fullName>T-complex protein 1 subunit alpha</fullName>
        <shortName>TCP-1-alpha</shortName>
    </recommendedName>
    <alternativeName>
        <fullName>CCT-alpha</fullName>
    </alternativeName>
</protein>
<name>TCPA_YEAST</name>
<keyword id="KW-0002">3D-structure</keyword>
<keyword id="KW-0007">Acetylation</keyword>
<keyword id="KW-0067">ATP-binding</keyword>
<keyword id="KW-0143">Chaperone</keyword>
<keyword id="KW-0963">Cytoplasm</keyword>
<keyword id="KW-0547">Nucleotide-binding</keyword>
<keyword id="KW-1185">Reference proteome</keyword>
<accession>P12612</accession>
<accession>D6VSJ6</accession>
<feature type="initiator methionine" description="Removed" evidence="3">
    <location>
        <position position="1"/>
    </location>
</feature>
<feature type="chain" id="PRO_0000128315" description="T-complex protein 1 subunit alpha">
    <location>
        <begin position="2"/>
        <end position="559"/>
    </location>
</feature>
<feature type="modified residue" description="N-acetylserine" evidence="3">
    <location>
        <position position="2"/>
    </location>
</feature>
<feature type="mutagenesis site" description="Temperature-sensitive." evidence="1">
    <original>G</original>
    <variation>E</variation>
    <location>
        <position position="48"/>
    </location>
</feature>
<feature type="sequence conflict" description="In Ref. 1; AAA35139." evidence="2" ref="1">
    <original>S</original>
    <variation>L</variation>
    <location>
        <position position="530"/>
    </location>
</feature>
<feature type="strand" evidence="4">
    <location>
        <begin position="5"/>
        <end position="7"/>
    </location>
</feature>
<feature type="turn" evidence="4">
    <location>
        <begin position="11"/>
        <end position="13"/>
    </location>
</feature>
<feature type="strand" evidence="4">
    <location>
        <begin position="15"/>
        <end position="20"/>
    </location>
</feature>
<feature type="helix" evidence="4">
    <location>
        <begin position="23"/>
        <end position="42"/>
    </location>
</feature>
<feature type="strand" evidence="5">
    <location>
        <begin position="45"/>
        <end position="47"/>
    </location>
</feature>
<feature type="strand" evidence="4">
    <location>
        <begin position="50"/>
        <end position="54"/>
    </location>
</feature>
<feature type="strand" evidence="4">
    <location>
        <begin position="56"/>
        <end position="58"/>
    </location>
</feature>
<feature type="strand" evidence="4">
    <location>
        <begin position="60"/>
        <end position="63"/>
    </location>
</feature>
<feature type="helix" evidence="4">
    <location>
        <begin position="66"/>
        <end position="72"/>
    </location>
</feature>
<feature type="helix" evidence="4">
    <location>
        <begin position="80"/>
        <end position="93"/>
    </location>
</feature>
<feature type="helix" evidence="4">
    <location>
        <begin position="98"/>
        <end position="117"/>
    </location>
</feature>
<feature type="helix" evidence="4">
    <location>
        <begin position="122"/>
        <end position="143"/>
    </location>
</feature>
<feature type="strand" evidence="4">
    <location>
        <begin position="150"/>
        <end position="152"/>
    </location>
</feature>
<feature type="helix" evidence="4">
    <location>
        <begin position="156"/>
        <end position="164"/>
    </location>
</feature>
<feature type="strand" evidence="5">
    <location>
        <begin position="165"/>
        <end position="167"/>
    </location>
</feature>
<feature type="helix" evidence="4">
    <location>
        <begin position="168"/>
        <end position="172"/>
    </location>
</feature>
<feature type="helix" evidence="4">
    <location>
        <begin position="173"/>
        <end position="186"/>
    </location>
</feature>
<feature type="strand" evidence="4">
    <location>
        <begin position="189"/>
        <end position="191"/>
    </location>
</feature>
<feature type="turn" evidence="4">
    <location>
        <begin position="192"/>
        <end position="194"/>
    </location>
</feature>
<feature type="strand" evidence="4">
    <location>
        <begin position="195"/>
        <end position="197"/>
    </location>
</feature>
<feature type="strand" evidence="4">
    <location>
        <begin position="203"/>
        <end position="211"/>
    </location>
</feature>
<feature type="helix" evidence="4">
    <location>
        <begin position="213"/>
        <end position="215"/>
    </location>
</feature>
<feature type="strand" evidence="4">
    <location>
        <begin position="218"/>
        <end position="225"/>
    </location>
</feature>
<feature type="strand" evidence="4">
    <location>
        <begin position="235"/>
        <end position="237"/>
    </location>
</feature>
<feature type="strand" evidence="4">
    <location>
        <begin position="239"/>
        <end position="241"/>
    </location>
</feature>
<feature type="strand" evidence="4">
    <location>
        <begin position="244"/>
        <end position="247"/>
    </location>
</feature>
<feature type="strand" evidence="5">
    <location>
        <begin position="251"/>
        <end position="253"/>
    </location>
</feature>
<feature type="strand" evidence="4">
    <location>
        <begin position="256"/>
        <end position="259"/>
    </location>
</feature>
<feature type="helix" evidence="4">
    <location>
        <begin position="269"/>
        <end position="291"/>
    </location>
</feature>
<feature type="strand" evidence="4">
    <location>
        <begin position="294"/>
        <end position="300"/>
    </location>
</feature>
<feature type="helix" evidence="4">
    <location>
        <begin position="304"/>
        <end position="312"/>
    </location>
</feature>
<feature type="strand" evidence="4">
    <location>
        <begin position="316"/>
        <end position="318"/>
    </location>
</feature>
<feature type="helix" evidence="4">
    <location>
        <begin position="323"/>
        <end position="333"/>
    </location>
</feature>
<feature type="strand" evidence="4">
    <location>
        <begin position="338"/>
        <end position="341"/>
    </location>
</feature>
<feature type="strand" evidence="4">
    <location>
        <begin position="344"/>
        <end position="347"/>
    </location>
</feature>
<feature type="helix" evidence="4">
    <location>
        <begin position="352"/>
        <end position="354"/>
    </location>
</feature>
<feature type="strand" evidence="4">
    <location>
        <begin position="359"/>
        <end position="366"/>
    </location>
</feature>
<feature type="strand" evidence="4">
    <location>
        <begin position="369"/>
        <end position="375"/>
    </location>
</feature>
<feature type="strand" evidence="4">
    <location>
        <begin position="378"/>
        <end position="380"/>
    </location>
</feature>
<feature type="strand" evidence="4">
    <location>
        <begin position="384"/>
        <end position="391"/>
    </location>
</feature>
<feature type="helix" evidence="4">
    <location>
        <begin position="392"/>
        <end position="414"/>
    </location>
</feature>
<feature type="strand" evidence="4">
    <location>
        <begin position="418"/>
        <end position="420"/>
    </location>
</feature>
<feature type="turn" evidence="4">
    <location>
        <begin position="421"/>
        <end position="423"/>
    </location>
</feature>
<feature type="helix" evidence="4">
    <location>
        <begin position="424"/>
        <end position="440"/>
    </location>
</feature>
<feature type="helix" evidence="4">
    <location>
        <begin position="444"/>
        <end position="454"/>
    </location>
</feature>
<feature type="helix" evidence="4">
    <location>
        <begin position="457"/>
        <end position="464"/>
    </location>
</feature>
<feature type="turn" evidence="4">
    <location>
        <begin position="465"/>
        <end position="467"/>
    </location>
</feature>
<feature type="helix" evidence="4">
    <location>
        <begin position="470"/>
        <end position="485"/>
    </location>
</feature>
<feature type="helix" evidence="5">
    <location>
        <begin position="492"/>
        <end position="497"/>
    </location>
</feature>
<feature type="strand" evidence="4">
    <location>
        <begin position="499"/>
        <end position="503"/>
    </location>
</feature>
<feature type="turn" evidence="4">
    <location>
        <begin position="504"/>
        <end position="507"/>
    </location>
</feature>
<feature type="strand" evidence="4">
    <location>
        <begin position="508"/>
        <end position="511"/>
    </location>
</feature>
<feature type="helix" evidence="4">
    <location>
        <begin position="512"/>
        <end position="515"/>
    </location>
</feature>
<feature type="strand" evidence="4">
    <location>
        <begin position="518"/>
        <end position="520"/>
    </location>
</feature>
<feature type="helix" evidence="4">
    <location>
        <begin position="521"/>
        <end position="539"/>
    </location>
</feature>
<feature type="strand" evidence="4">
    <location>
        <begin position="541"/>
        <end position="546"/>
    </location>
</feature>